<dbReference type="EMBL" id="BX936398">
    <property type="protein sequence ID" value="CAH22922.1"/>
    <property type="molecule type" value="Genomic_DNA"/>
</dbReference>
<dbReference type="RefSeq" id="WP_002213332.1">
    <property type="nucleotide sequence ID" value="NZ_CP009712.1"/>
</dbReference>
<dbReference type="SMR" id="Q664T5"/>
<dbReference type="GeneID" id="96663182"/>
<dbReference type="KEGG" id="ypo:BZ17_2903"/>
<dbReference type="KEGG" id="yps:YPTB3684"/>
<dbReference type="PATRIC" id="fig|273123.14.peg.3044"/>
<dbReference type="Proteomes" id="UP000001011">
    <property type="component" value="Chromosome"/>
</dbReference>
<dbReference type="GO" id="GO:1990904">
    <property type="term" value="C:ribonucleoprotein complex"/>
    <property type="evidence" value="ECO:0007669"/>
    <property type="project" value="UniProtKB-KW"/>
</dbReference>
<dbReference type="GO" id="GO:0005840">
    <property type="term" value="C:ribosome"/>
    <property type="evidence" value="ECO:0007669"/>
    <property type="project" value="UniProtKB-KW"/>
</dbReference>
<dbReference type="GO" id="GO:0019843">
    <property type="term" value="F:rRNA binding"/>
    <property type="evidence" value="ECO:0007669"/>
    <property type="project" value="UniProtKB-UniRule"/>
</dbReference>
<dbReference type="GO" id="GO:0003735">
    <property type="term" value="F:structural constituent of ribosome"/>
    <property type="evidence" value="ECO:0007669"/>
    <property type="project" value="InterPro"/>
</dbReference>
<dbReference type="GO" id="GO:0006412">
    <property type="term" value="P:translation"/>
    <property type="evidence" value="ECO:0007669"/>
    <property type="project" value="UniProtKB-UniRule"/>
</dbReference>
<dbReference type="FunFam" id="3.30.1370.30:FF:000003">
    <property type="entry name" value="30S ribosomal protein S8"/>
    <property type="match status" value="1"/>
</dbReference>
<dbReference type="FunFam" id="3.30.1490.10:FF:000001">
    <property type="entry name" value="30S ribosomal protein S8"/>
    <property type="match status" value="1"/>
</dbReference>
<dbReference type="Gene3D" id="3.30.1370.30">
    <property type="match status" value="1"/>
</dbReference>
<dbReference type="Gene3D" id="3.30.1490.10">
    <property type="match status" value="1"/>
</dbReference>
<dbReference type="HAMAP" id="MF_01302_B">
    <property type="entry name" value="Ribosomal_uS8_B"/>
    <property type="match status" value="1"/>
</dbReference>
<dbReference type="InterPro" id="IPR000630">
    <property type="entry name" value="Ribosomal_uS8"/>
</dbReference>
<dbReference type="InterPro" id="IPR047863">
    <property type="entry name" value="Ribosomal_uS8_CS"/>
</dbReference>
<dbReference type="InterPro" id="IPR035987">
    <property type="entry name" value="Ribosomal_uS8_sf"/>
</dbReference>
<dbReference type="NCBIfam" id="NF001109">
    <property type="entry name" value="PRK00136.1"/>
    <property type="match status" value="1"/>
</dbReference>
<dbReference type="PANTHER" id="PTHR11758">
    <property type="entry name" value="40S RIBOSOMAL PROTEIN S15A"/>
    <property type="match status" value="1"/>
</dbReference>
<dbReference type="Pfam" id="PF00410">
    <property type="entry name" value="Ribosomal_S8"/>
    <property type="match status" value="1"/>
</dbReference>
<dbReference type="SUPFAM" id="SSF56047">
    <property type="entry name" value="Ribosomal protein S8"/>
    <property type="match status" value="1"/>
</dbReference>
<dbReference type="PROSITE" id="PS00053">
    <property type="entry name" value="RIBOSOMAL_S8"/>
    <property type="match status" value="1"/>
</dbReference>
<feature type="initiator methionine" description="Removed" evidence="1">
    <location>
        <position position="1"/>
    </location>
</feature>
<feature type="chain" id="PRO_0000126532" description="Small ribosomal subunit protein uS8">
    <location>
        <begin position="2"/>
        <end position="130"/>
    </location>
</feature>
<gene>
    <name evidence="2" type="primary">rpsH</name>
    <name type="ordered locus">YPTB3684</name>
</gene>
<keyword id="KW-0687">Ribonucleoprotein</keyword>
<keyword id="KW-0689">Ribosomal protein</keyword>
<keyword id="KW-0694">RNA-binding</keyword>
<keyword id="KW-0699">rRNA-binding</keyword>
<evidence type="ECO:0000250" key="1"/>
<evidence type="ECO:0000255" key="2">
    <source>
        <dbReference type="HAMAP-Rule" id="MF_01302"/>
    </source>
</evidence>
<evidence type="ECO:0000305" key="3"/>
<protein>
    <recommendedName>
        <fullName evidence="2">Small ribosomal subunit protein uS8</fullName>
    </recommendedName>
    <alternativeName>
        <fullName evidence="3">30S ribosomal protein S8</fullName>
    </alternativeName>
</protein>
<reference key="1">
    <citation type="journal article" date="2004" name="Proc. Natl. Acad. Sci. U.S.A.">
        <title>Insights into the evolution of Yersinia pestis through whole-genome comparison with Yersinia pseudotuberculosis.</title>
        <authorList>
            <person name="Chain P.S.G."/>
            <person name="Carniel E."/>
            <person name="Larimer F.W."/>
            <person name="Lamerdin J."/>
            <person name="Stoutland P.O."/>
            <person name="Regala W.M."/>
            <person name="Georgescu A.M."/>
            <person name="Vergez L.M."/>
            <person name="Land M.L."/>
            <person name="Motin V.L."/>
            <person name="Brubaker R.R."/>
            <person name="Fowler J."/>
            <person name="Hinnebusch J."/>
            <person name="Marceau M."/>
            <person name="Medigue C."/>
            <person name="Simonet M."/>
            <person name="Chenal-Francisque V."/>
            <person name="Souza B."/>
            <person name="Dacheux D."/>
            <person name="Elliott J.M."/>
            <person name="Derbise A."/>
            <person name="Hauser L.J."/>
            <person name="Garcia E."/>
        </authorList>
    </citation>
    <scope>NUCLEOTIDE SEQUENCE [LARGE SCALE GENOMIC DNA]</scope>
    <source>
        <strain>IP32953</strain>
    </source>
</reference>
<comment type="function">
    <text evidence="2">One of the primary rRNA binding proteins, it binds directly to 16S rRNA central domain where it helps coordinate assembly of the platform of the 30S subunit.</text>
</comment>
<comment type="subunit">
    <text evidence="2">Part of the 30S ribosomal subunit. Contacts proteins S5 and S12.</text>
</comment>
<comment type="similarity">
    <text evidence="2">Belongs to the universal ribosomal protein uS8 family.</text>
</comment>
<proteinExistence type="inferred from homology"/>
<sequence length="130" mass="14109">MSMQDPIADMLTRIRNGQAANKVAVTMPSSKLKVAIANVLKEEGFIEDFKIEGDTKPVLELALKYFQGKAVVESIQRISRPGLRIYKKKDELPKVMAGLGIAVISTSKGVMTDRAARQAGLGGEIICYVA</sequence>
<name>RS8_YERPS</name>
<organism>
    <name type="scientific">Yersinia pseudotuberculosis serotype I (strain IP32953)</name>
    <dbReference type="NCBI Taxonomy" id="273123"/>
    <lineage>
        <taxon>Bacteria</taxon>
        <taxon>Pseudomonadati</taxon>
        <taxon>Pseudomonadota</taxon>
        <taxon>Gammaproteobacteria</taxon>
        <taxon>Enterobacterales</taxon>
        <taxon>Yersiniaceae</taxon>
        <taxon>Yersinia</taxon>
    </lineage>
</organism>
<accession>Q664T5</accession>